<proteinExistence type="inferred from homology"/>
<evidence type="ECO:0000255" key="1">
    <source>
        <dbReference type="HAMAP-Rule" id="MF_01658"/>
    </source>
</evidence>
<protein>
    <recommendedName>
        <fullName evidence="1">3-demethoxyubiquinol 3-hydroxylase</fullName>
        <shortName evidence="1">DMQ hydroxylase</shortName>
        <ecNumber evidence="1">1.14.99.60</ecNumber>
    </recommendedName>
    <alternativeName>
        <fullName evidence="1">2-nonaprenyl-3-methyl-6-methoxy-1,4-benzoquinol hydroxylase</fullName>
    </alternativeName>
</protein>
<reference key="1">
    <citation type="submission" date="2007-04" db="EMBL/GenBank/DDBJ databases">
        <title>Complete sequence of Pseudomonas mendocina ymp.</title>
        <authorList>
            <consortium name="US DOE Joint Genome Institute"/>
            <person name="Copeland A."/>
            <person name="Lucas S."/>
            <person name="Lapidus A."/>
            <person name="Barry K."/>
            <person name="Glavina del Rio T."/>
            <person name="Dalin E."/>
            <person name="Tice H."/>
            <person name="Pitluck S."/>
            <person name="Kiss H."/>
            <person name="Brettin T."/>
            <person name="Detter J.C."/>
            <person name="Bruce D."/>
            <person name="Han C."/>
            <person name="Schmutz J."/>
            <person name="Larimer F."/>
            <person name="Land M."/>
            <person name="Hauser L."/>
            <person name="Kyrpides N."/>
            <person name="Mikhailova N."/>
            <person name="Hersman L."/>
            <person name="Dubois J."/>
            <person name="Maurice P."/>
            <person name="Richardson P."/>
        </authorList>
    </citation>
    <scope>NUCLEOTIDE SEQUENCE [LARGE SCALE GENOMIC DNA]</scope>
    <source>
        <strain>ymp</strain>
    </source>
</reference>
<feature type="chain" id="PRO_0000338713" description="3-demethoxyubiquinol 3-hydroxylase">
    <location>
        <begin position="1"/>
        <end position="215"/>
    </location>
</feature>
<feature type="binding site" evidence="1">
    <location>
        <position position="64"/>
    </location>
    <ligand>
        <name>Fe cation</name>
        <dbReference type="ChEBI" id="CHEBI:24875"/>
        <label>1</label>
    </ligand>
</feature>
<feature type="binding site" evidence="1">
    <location>
        <position position="94"/>
    </location>
    <ligand>
        <name>Fe cation</name>
        <dbReference type="ChEBI" id="CHEBI:24875"/>
        <label>1</label>
    </ligand>
</feature>
<feature type="binding site" evidence="1">
    <location>
        <position position="94"/>
    </location>
    <ligand>
        <name>Fe cation</name>
        <dbReference type="ChEBI" id="CHEBI:24875"/>
        <label>2</label>
    </ligand>
</feature>
<feature type="binding site" evidence="1">
    <location>
        <position position="97"/>
    </location>
    <ligand>
        <name>Fe cation</name>
        <dbReference type="ChEBI" id="CHEBI:24875"/>
        <label>1</label>
    </ligand>
</feature>
<feature type="binding site" evidence="1">
    <location>
        <position position="146"/>
    </location>
    <ligand>
        <name>Fe cation</name>
        <dbReference type="ChEBI" id="CHEBI:24875"/>
        <label>2</label>
    </ligand>
</feature>
<feature type="binding site" evidence="1">
    <location>
        <position position="178"/>
    </location>
    <ligand>
        <name>Fe cation</name>
        <dbReference type="ChEBI" id="CHEBI:24875"/>
        <label>1</label>
    </ligand>
</feature>
<feature type="binding site" evidence="1">
    <location>
        <position position="178"/>
    </location>
    <ligand>
        <name>Fe cation</name>
        <dbReference type="ChEBI" id="CHEBI:24875"/>
        <label>2</label>
    </ligand>
</feature>
<feature type="binding site" evidence="1">
    <location>
        <position position="181"/>
    </location>
    <ligand>
        <name>Fe cation</name>
        <dbReference type="ChEBI" id="CHEBI:24875"/>
        <label>2</label>
    </ligand>
</feature>
<gene>
    <name evidence="1" type="primary">coq7</name>
    <name type="ordered locus">Pmen_3941</name>
</gene>
<accession>A4XZC2</accession>
<organism>
    <name type="scientific">Ectopseudomonas mendocina (strain ymp)</name>
    <name type="common">Pseudomonas mendocina</name>
    <dbReference type="NCBI Taxonomy" id="399739"/>
    <lineage>
        <taxon>Bacteria</taxon>
        <taxon>Pseudomonadati</taxon>
        <taxon>Pseudomonadota</taxon>
        <taxon>Gammaproteobacteria</taxon>
        <taxon>Pseudomonadales</taxon>
        <taxon>Pseudomonadaceae</taxon>
        <taxon>Ectopseudomonas</taxon>
    </lineage>
</organism>
<comment type="function">
    <text evidence="1">Catalyzes the hydroxylation of 2-nonaprenyl-3-methyl-6-methoxy-1,4-benzoquinol during ubiquinone biosynthesis.</text>
</comment>
<comment type="catalytic activity">
    <reaction evidence="1">
        <text>a 5-methoxy-2-methyl-3-(all-trans-polyprenyl)benzene-1,4-diol + AH2 + O2 = a 3-demethylubiquinol + A + H2O</text>
        <dbReference type="Rhea" id="RHEA:50908"/>
        <dbReference type="Rhea" id="RHEA-COMP:10859"/>
        <dbReference type="Rhea" id="RHEA-COMP:10914"/>
        <dbReference type="ChEBI" id="CHEBI:13193"/>
        <dbReference type="ChEBI" id="CHEBI:15377"/>
        <dbReference type="ChEBI" id="CHEBI:15379"/>
        <dbReference type="ChEBI" id="CHEBI:17499"/>
        <dbReference type="ChEBI" id="CHEBI:84167"/>
        <dbReference type="ChEBI" id="CHEBI:84422"/>
        <dbReference type="EC" id="1.14.99.60"/>
    </reaction>
</comment>
<comment type="cofactor">
    <cofactor evidence="1">
        <name>Fe cation</name>
        <dbReference type="ChEBI" id="CHEBI:24875"/>
    </cofactor>
    <text evidence="1">Binds 2 iron ions per subunit.</text>
</comment>
<comment type="pathway">
    <text evidence="1">Cofactor biosynthesis; ubiquinone biosynthesis.</text>
</comment>
<comment type="subcellular location">
    <subcellularLocation>
        <location evidence="1">Cell membrane</location>
        <topology evidence="1">Peripheral membrane protein</topology>
    </subcellularLocation>
</comment>
<comment type="similarity">
    <text evidence="1">Belongs to the COQ7 family.</text>
</comment>
<sequence length="215" mass="23508">MASERQYSPVDRLLLQADAALRTLLPFSGASSRPSPAIVQAETDLNPEESRHIAGLMRINHTGEVCAQALYQGQALTAKLPEVRSAMEHAADEEIDHLAWCEQRIRELGSHPSVLNPLFYGLSFGVGAVAGLVSDRVSLGFVAATEDQVCKHLDEHLEQIPEHDAKSRAILEQMRIDEEQHANSALAAGGVRFPAPVKFGMTLLSKVMTKSTYRI</sequence>
<keyword id="KW-1003">Cell membrane</keyword>
<keyword id="KW-0408">Iron</keyword>
<keyword id="KW-0472">Membrane</keyword>
<keyword id="KW-0479">Metal-binding</keyword>
<keyword id="KW-0503">Monooxygenase</keyword>
<keyword id="KW-0560">Oxidoreductase</keyword>
<keyword id="KW-0831">Ubiquinone biosynthesis</keyword>
<dbReference type="EC" id="1.14.99.60" evidence="1"/>
<dbReference type="EMBL" id="CP000680">
    <property type="protein sequence ID" value="ABP86688.1"/>
    <property type="molecule type" value="Genomic_DNA"/>
</dbReference>
<dbReference type="SMR" id="A4XZC2"/>
<dbReference type="STRING" id="399739.Pmen_3941"/>
<dbReference type="KEGG" id="pmy:Pmen_3941"/>
<dbReference type="PATRIC" id="fig|399739.8.peg.3994"/>
<dbReference type="eggNOG" id="COG2941">
    <property type="taxonomic scope" value="Bacteria"/>
</dbReference>
<dbReference type="HOGENOM" id="CLU_088601_0_0_6"/>
<dbReference type="OrthoDB" id="5192789at2"/>
<dbReference type="UniPathway" id="UPA00232"/>
<dbReference type="GO" id="GO:0005886">
    <property type="term" value="C:plasma membrane"/>
    <property type="evidence" value="ECO:0007669"/>
    <property type="project" value="UniProtKB-SubCell"/>
</dbReference>
<dbReference type="GO" id="GO:0008682">
    <property type="term" value="F:3-demethoxyubiquinol 3-hydroxylase activity"/>
    <property type="evidence" value="ECO:0007669"/>
    <property type="project" value="UniProtKB-EC"/>
</dbReference>
<dbReference type="GO" id="GO:0046872">
    <property type="term" value="F:metal ion binding"/>
    <property type="evidence" value="ECO:0007669"/>
    <property type="project" value="UniProtKB-KW"/>
</dbReference>
<dbReference type="GO" id="GO:0006744">
    <property type="term" value="P:ubiquinone biosynthetic process"/>
    <property type="evidence" value="ECO:0007669"/>
    <property type="project" value="UniProtKB-UniRule"/>
</dbReference>
<dbReference type="CDD" id="cd01042">
    <property type="entry name" value="DMQH"/>
    <property type="match status" value="1"/>
</dbReference>
<dbReference type="FunFam" id="1.20.1260.10:FF:000013">
    <property type="entry name" value="2-nonaprenyl-3-methyl-6-methoxy-1,4-benzoquinol hydroxylase"/>
    <property type="match status" value="1"/>
</dbReference>
<dbReference type="Gene3D" id="1.20.1260.10">
    <property type="match status" value="1"/>
</dbReference>
<dbReference type="HAMAP" id="MF_01658">
    <property type="entry name" value="COQ7"/>
    <property type="match status" value="1"/>
</dbReference>
<dbReference type="InterPro" id="IPR047809">
    <property type="entry name" value="COQ7_proteobact"/>
</dbReference>
<dbReference type="InterPro" id="IPR012347">
    <property type="entry name" value="Ferritin-like"/>
</dbReference>
<dbReference type="InterPro" id="IPR009078">
    <property type="entry name" value="Ferritin-like_SF"/>
</dbReference>
<dbReference type="InterPro" id="IPR011566">
    <property type="entry name" value="Ubq_synth_Coq7"/>
</dbReference>
<dbReference type="NCBIfam" id="NF033656">
    <property type="entry name" value="DMQ_monoox_COQ7"/>
    <property type="match status" value="1"/>
</dbReference>
<dbReference type="PANTHER" id="PTHR11237:SF4">
    <property type="entry name" value="5-DEMETHOXYUBIQUINONE HYDROXYLASE, MITOCHONDRIAL"/>
    <property type="match status" value="1"/>
</dbReference>
<dbReference type="PANTHER" id="PTHR11237">
    <property type="entry name" value="COENZYME Q10 BIOSYNTHESIS PROTEIN 7"/>
    <property type="match status" value="1"/>
</dbReference>
<dbReference type="Pfam" id="PF03232">
    <property type="entry name" value="COQ7"/>
    <property type="match status" value="1"/>
</dbReference>
<dbReference type="SUPFAM" id="SSF47240">
    <property type="entry name" value="Ferritin-like"/>
    <property type="match status" value="1"/>
</dbReference>
<name>COQ7_ECTM1</name>